<sequence>MANYGGHPQTEPHAIPDSILEEKSRKWKQLQGKRYSEKKKFGMSDTQKEEMPPEHVRKVIRDHGDMTSRKYRHDKRVYLGALKYMPHAVLKLLENMPMPWEQIRDVKVLYHITGAITFVNDIPRVIEPVYMAQWGTMWIMMRREKRDRRHFKRMRFPPFDDEEPPLDYADNILDVEPLEPIQMELDPEEDGAVAEWFYDHKPLATTRFVNGPTYRKWAFSIPQMSTLYRLANQLLTDLVDDNYFYLFDMKSFFTAKALNVAIPGGPKFEPLVKDLHTDEDWNEFNDINKVIIRAPIRTEYRIAFPFMYNNLISSLPVQVSWYHTPSVVFIKTEDPDLPAFYYDPLINPIVLSNLKATEENLPEGEEEDEWELPEDVRPIFEDVPLYTDNTANGLALLWAPRPFNLRSGRTRRAVDVPLVKSWYREHCPAGMPVKVRVSYQKLLKVFVLNALKHRPPKPQKRRYLFRSFKATKFFQTTTLDWVEAGLQVLRQGYNMLNLLIHRKNLNYLHLDYNFNLKPVKTLTTKERKKSRFGNAFHLCREILRLTKLVVDAHVQYRLNNVDAYQLADGLQYIFAHVGQLTGMYRYKYKLMRQVRMCKDLKHLIYYRFNTGPVGKGPGCGFWAPGWRVWLFFLRGITPLLERWLGNLLSRQFEGRHSKGVAKTVTKQRVESHFDLELRAAVMHDILDMMPDGIKQNKARVILQHLSEAWRCWKANIPWKVPGLPTPVENMILRYVKAKADWWTNSAHYNRERVRRGATVDKTVCKKNLGRLTRLYLKSEQERQHNYLKDGPYISAEEAVAIYTTTVHWLESRRFSPIPFPPLSYKHDTKLLILALERLKESYSVKNRLNQSQREELALIEQAYDNPHEALSRIKRHMLTQRAFKEVGIEFMDLYTHLIPVYDIEPLEKVTDAYLDQYLWYEADKRRLFPAWVKPGDTEPPPLLTYKWCQGLNNLQDVWETSEGECNVIMETKLEKIAEKMDLTLLNRLLRLIVDHNIADYMTSKNNVLINYKDMNHTNSFGIIRGLQFASFIVQFYGLVLDLLVLGLRRASEIAGPPQCPNEFLQFQDVATEIGHPIRLYCRYIDRVWIMFRFSADEARDLIQRYLTEHPDPNNENIVGYNNKKCWPRDARMRLMKHDVNLGRAVFWDIKNRLPRSITTVEWENSFVSVYSKDNPNMLFDMSGFECRILPKCRTANEEFVHRDGVWNLQNEVTKERTAQCFLKVDEESLSKFHNRIRQILMSSGSTTFTKIVNKWNTALIGLMTYFREAVVNTQELLDLLVKCENKIQTRIKIGLNSKMPSRFPPVVFYTPKEIGGLGMLSMGHVLIPQSDLRWMQQTEAGGVTHFRSGMSHDEDQLIPNLYRYIQPWEAEFVDSVRVWAEYALKRQEANAQNRRLTLEDLDDSWDRGIPRINTLFQKDRHTLAYDKGWRVRTEFKAYQILKQNPFWWTHQRHDGKLWNLNNYRTDMIQALGGVEGILEHTLFRGTYFPTWEGLFWERASGFEESMKFKKLTNAQRSGLNQIPNRRFTLWWSPTINRANVYVGFQVQLDLTGIFMHGKIPTLKISLIQIFRAHLWQKIHESVVMDLCQVFDQELDALEIQTVQKETIHPRKSYKMNSSCADVLLFAQYKWNVSRPSLMADSKDVMDNTTTQKYWLDVQLRWGDYDSHDVERYARAKFLDYTTDNMSIYPSPTGVLIAIDLAYNLYSAYGNWFPGMKPLIRQAMAKIIKANPAFYVLRERIRKGLQLYSSEPTEPYLTSQNYGELFSNQIIWFVDDTNVYRVTIHKTFEGNLTTKPINGAIFIFNPRTGQLFLKIIHTSVWAGQKRLSQLAKWKTAEEVAALIRSLPVEEQPRQIIVTRKAMLDPLEVHLLDFPNIVIKGSELMLPFQAIMKVEKFGDLILKATEPQMVLFNLYDDWLKTISSYTAFSRVVLIMRGMHINPDKTKVILKPDKTTITEPHHIWPTLSDDDWIKVELALKDMILADYGKKNNVNVASLTQSEVRDIILGMEISAPSQQRQQIADIEKQTKEQSQVTATTTRTVNKHGDEIITATTSNYETASFASRTEWRVRAISSTNLHLRTQHIYVNSDDVKDTGYTYILPKNILKKFITISDLRTQIAGFMYGVSPPDNPQVKEIRCIVLVPQTGSHQQVNLPTQLPDHELLRDFEPLGWMHTQPNELPQLSPQDVTTHAKLLTDNISWDGEKTVMITCSFTPGSVSLTAYKLTPSGYEWGKANTDKGNNPKGYMPTHYEKVQMLLSDRFLGYFMVPSNGVWNYNFQGQRWSPAMKFDVCLSNPKEYYHEDHRPVHFHNFKAFDDPLGTGSADREDAFA</sequence>
<evidence type="ECO:0000250" key="1"/>
<evidence type="ECO:0000250" key="2">
    <source>
        <dbReference type="UniProtKB" id="Q99PV0"/>
    </source>
</evidence>
<evidence type="ECO:0000255" key="3">
    <source>
        <dbReference type="PROSITE-ProRule" id="PRU01182"/>
    </source>
</evidence>
<evidence type="ECO:0000256" key="4">
    <source>
        <dbReference type="SAM" id="MobiDB-lite"/>
    </source>
</evidence>
<evidence type="ECO:0007829" key="5">
    <source>
        <dbReference type="PDB" id="2P8R"/>
    </source>
</evidence>
<keyword id="KW-0002">3D-structure</keyword>
<keyword id="KW-0507">mRNA processing</keyword>
<keyword id="KW-0508">mRNA splicing</keyword>
<keyword id="KW-0539">Nucleus</keyword>
<keyword id="KW-1185">Reference proteome</keyword>
<keyword id="KW-0687">Ribonucleoprotein</keyword>
<keyword id="KW-0694">RNA-binding</keyword>
<keyword id="KW-0747">Spliceosome</keyword>
<dbReference type="EMBL" id="FO080718">
    <property type="protein sequence ID" value="CCD66122.1"/>
    <property type="molecule type" value="Genomic_DNA"/>
</dbReference>
<dbReference type="PIR" id="S44625">
    <property type="entry name" value="S44625"/>
</dbReference>
<dbReference type="RefSeq" id="NP_498785.1">
    <property type="nucleotide sequence ID" value="NM_066384.7"/>
</dbReference>
<dbReference type="PDB" id="2P87">
    <property type="method" value="X-ray"/>
    <property type="resolution" value="2.30 A"/>
    <property type="chains" value="A=2057-2329"/>
</dbReference>
<dbReference type="PDB" id="2P8R">
    <property type="method" value="X-ray"/>
    <property type="resolution" value="2.10 A"/>
    <property type="chains" value="A=2057-2329"/>
</dbReference>
<dbReference type="PDB" id="8RO0">
    <property type="method" value="EM"/>
    <property type="resolution" value="2.90 A"/>
    <property type="chains" value="A=1-2329"/>
</dbReference>
<dbReference type="PDB" id="8RO1">
    <property type="method" value="EM"/>
    <property type="resolution" value="3.00 A"/>
    <property type="chains" value="A=1-2329"/>
</dbReference>
<dbReference type="PDBsum" id="2P87"/>
<dbReference type="PDBsum" id="2P8R"/>
<dbReference type="PDBsum" id="8RO0"/>
<dbReference type="PDBsum" id="8RO1"/>
<dbReference type="EMDB" id="EMD-19397"/>
<dbReference type="EMDB" id="EMD-19398"/>
<dbReference type="SMR" id="P34369"/>
<dbReference type="BioGRID" id="41358">
    <property type="interactions" value="38"/>
</dbReference>
<dbReference type="DIP" id="DIP-27427N"/>
<dbReference type="FunCoup" id="P34369">
    <property type="interactions" value="3267"/>
</dbReference>
<dbReference type="STRING" id="6239.C50C3.6.1"/>
<dbReference type="iPTMnet" id="P34369"/>
<dbReference type="PaxDb" id="6239-C50C3.6"/>
<dbReference type="PeptideAtlas" id="P34369"/>
<dbReference type="EnsemblMetazoa" id="C50C3.6.1">
    <property type="protein sequence ID" value="C50C3.6.1"/>
    <property type="gene ID" value="WBGene00004187"/>
</dbReference>
<dbReference type="GeneID" id="176153"/>
<dbReference type="KEGG" id="cel:CELE_C50C3.6"/>
<dbReference type="UCSC" id="C50C3.6">
    <property type="organism name" value="c. elegans"/>
</dbReference>
<dbReference type="AGR" id="WB:WBGene00004187"/>
<dbReference type="CTD" id="176153"/>
<dbReference type="WormBase" id="C50C3.6">
    <property type="protein sequence ID" value="CE00122"/>
    <property type="gene ID" value="WBGene00004187"/>
    <property type="gene designation" value="prp-8"/>
</dbReference>
<dbReference type="eggNOG" id="KOG1795">
    <property type="taxonomic scope" value="Eukaryota"/>
</dbReference>
<dbReference type="GeneTree" id="ENSGT00390000015210"/>
<dbReference type="HOGENOM" id="CLU_000380_3_0_1"/>
<dbReference type="InParanoid" id="P34369"/>
<dbReference type="OMA" id="ANKWNTS"/>
<dbReference type="OrthoDB" id="1931567at2759"/>
<dbReference type="PhylomeDB" id="P34369"/>
<dbReference type="Reactome" id="R-CEL-72163">
    <property type="pathway name" value="mRNA Splicing - Major Pathway"/>
</dbReference>
<dbReference type="Reactome" id="R-CEL-72165">
    <property type="pathway name" value="mRNA Splicing - Minor Pathway"/>
</dbReference>
<dbReference type="EvolutionaryTrace" id="P34369"/>
<dbReference type="PRO" id="PR:P34369"/>
<dbReference type="Proteomes" id="UP000001940">
    <property type="component" value="Chromosome III"/>
</dbReference>
<dbReference type="Bgee" id="WBGene00004187">
    <property type="expression patterns" value="Expressed in embryo and 4 other cell types or tissues"/>
</dbReference>
<dbReference type="GO" id="GO:0071013">
    <property type="term" value="C:catalytic step 2 spliceosome"/>
    <property type="evidence" value="ECO:0000318"/>
    <property type="project" value="GO_Central"/>
</dbReference>
<dbReference type="GO" id="GO:0005682">
    <property type="term" value="C:U5 snRNP"/>
    <property type="evidence" value="ECO:0000318"/>
    <property type="project" value="GO_Central"/>
</dbReference>
<dbReference type="GO" id="GO:0008237">
    <property type="term" value="F:metallopeptidase activity"/>
    <property type="evidence" value="ECO:0007669"/>
    <property type="project" value="InterPro"/>
</dbReference>
<dbReference type="GO" id="GO:0097157">
    <property type="term" value="F:pre-mRNA intronic binding"/>
    <property type="evidence" value="ECO:0000318"/>
    <property type="project" value="GO_Central"/>
</dbReference>
<dbReference type="GO" id="GO:0030619">
    <property type="term" value="F:U1 snRNA binding"/>
    <property type="evidence" value="ECO:0000318"/>
    <property type="project" value="GO_Central"/>
</dbReference>
<dbReference type="GO" id="GO:0030620">
    <property type="term" value="F:U2 snRNA binding"/>
    <property type="evidence" value="ECO:0000318"/>
    <property type="project" value="GO_Central"/>
</dbReference>
<dbReference type="GO" id="GO:0030623">
    <property type="term" value="F:U5 snRNA binding"/>
    <property type="evidence" value="ECO:0000318"/>
    <property type="project" value="GO_Central"/>
</dbReference>
<dbReference type="GO" id="GO:0017070">
    <property type="term" value="F:U6 snRNA binding"/>
    <property type="evidence" value="ECO:0000318"/>
    <property type="project" value="GO_Central"/>
</dbReference>
<dbReference type="GO" id="GO:0000244">
    <property type="term" value="P:spliceosomal tri-snRNP complex assembly"/>
    <property type="evidence" value="ECO:0000318"/>
    <property type="project" value="GO_Central"/>
</dbReference>
<dbReference type="CDD" id="cd08056">
    <property type="entry name" value="MPN_PRP8"/>
    <property type="match status" value="1"/>
</dbReference>
<dbReference type="CDD" id="cd13838">
    <property type="entry name" value="RNase_H_like_Prp8_IV"/>
    <property type="match status" value="1"/>
</dbReference>
<dbReference type="FunFam" id="1.20.80.40:FF:000001">
    <property type="entry name" value="Pre-mRNA-processing-splicing factor 8"/>
    <property type="match status" value="1"/>
</dbReference>
<dbReference type="FunFam" id="3.30.420.230:FF:000001">
    <property type="entry name" value="Pre-mRNA-processing-splicing factor 8"/>
    <property type="match status" value="1"/>
</dbReference>
<dbReference type="FunFam" id="3.30.43.40:FF:000001">
    <property type="entry name" value="Pre-mRNA-processing-splicing factor 8"/>
    <property type="match status" value="1"/>
</dbReference>
<dbReference type="FunFam" id="3.40.140.10:FF:000002">
    <property type="entry name" value="Pre-mRNA-processing-splicing factor 8"/>
    <property type="match status" value="1"/>
</dbReference>
<dbReference type="FunFam" id="3.90.1570.40:FF:000001">
    <property type="entry name" value="Pre-mRNA-processing-splicing factor 8"/>
    <property type="match status" value="1"/>
</dbReference>
<dbReference type="Gene3D" id="1.20.80.40">
    <property type="match status" value="1"/>
</dbReference>
<dbReference type="Gene3D" id="3.30.420.230">
    <property type="match status" value="1"/>
</dbReference>
<dbReference type="Gene3D" id="3.90.1570.40">
    <property type="match status" value="1"/>
</dbReference>
<dbReference type="Gene3D" id="3.40.140.10">
    <property type="entry name" value="Cytidine Deaminase, domain 2"/>
    <property type="match status" value="1"/>
</dbReference>
<dbReference type="Gene3D" id="3.30.43.40">
    <property type="entry name" value="Pre-mRNA-processing-splicing factor 8, U5-snRNA-binding domain"/>
    <property type="match status" value="1"/>
</dbReference>
<dbReference type="InterPro" id="IPR000555">
    <property type="entry name" value="JAMM/MPN+_dom"/>
</dbReference>
<dbReference type="InterPro" id="IPR037518">
    <property type="entry name" value="MPN"/>
</dbReference>
<dbReference type="InterPro" id="IPR012591">
    <property type="entry name" value="PRO8NT"/>
</dbReference>
<dbReference type="InterPro" id="IPR012592">
    <property type="entry name" value="PROCN"/>
</dbReference>
<dbReference type="InterPro" id="IPR012984">
    <property type="entry name" value="PROCT"/>
</dbReference>
<dbReference type="InterPro" id="IPR027652">
    <property type="entry name" value="PRP8"/>
</dbReference>
<dbReference type="InterPro" id="IPR021983">
    <property type="entry name" value="PRP8_domainIV"/>
</dbReference>
<dbReference type="InterPro" id="IPR043173">
    <property type="entry name" value="Prp8_domainIV_fingers"/>
</dbReference>
<dbReference type="InterPro" id="IPR043172">
    <property type="entry name" value="Prp8_domainIV_palm"/>
</dbReference>
<dbReference type="InterPro" id="IPR019581">
    <property type="entry name" value="Prp8_U5-snRNA-bd"/>
</dbReference>
<dbReference type="InterPro" id="IPR042516">
    <property type="entry name" value="Prp8_U5-snRNA-bd_sf"/>
</dbReference>
<dbReference type="InterPro" id="IPR019580">
    <property type="entry name" value="Prp8_U6-snRNA-bd"/>
</dbReference>
<dbReference type="InterPro" id="IPR012337">
    <property type="entry name" value="RNaseH-like_sf"/>
</dbReference>
<dbReference type="InterPro" id="IPR019582">
    <property type="entry name" value="RRM_spliceosomal_PrP8"/>
</dbReference>
<dbReference type="PANTHER" id="PTHR11140">
    <property type="entry name" value="PRE-MRNA SPLICING FACTOR PRP8"/>
    <property type="match status" value="1"/>
</dbReference>
<dbReference type="PANTHER" id="PTHR11140:SF0">
    <property type="entry name" value="PRE-MRNA-PROCESSING-SPLICING FACTOR 8"/>
    <property type="match status" value="1"/>
</dbReference>
<dbReference type="Pfam" id="PF01398">
    <property type="entry name" value="JAB"/>
    <property type="match status" value="1"/>
</dbReference>
<dbReference type="Pfam" id="PF08082">
    <property type="entry name" value="PRO8NT"/>
    <property type="match status" value="1"/>
</dbReference>
<dbReference type="Pfam" id="PF08083">
    <property type="entry name" value="PROCN"/>
    <property type="match status" value="1"/>
</dbReference>
<dbReference type="Pfam" id="PF08084">
    <property type="entry name" value="PROCT"/>
    <property type="match status" value="1"/>
</dbReference>
<dbReference type="Pfam" id="PF12134">
    <property type="entry name" value="PRP8_domainIV"/>
    <property type="match status" value="1"/>
</dbReference>
<dbReference type="Pfam" id="PF10598">
    <property type="entry name" value="RRM_4"/>
    <property type="match status" value="1"/>
</dbReference>
<dbReference type="Pfam" id="PF10597">
    <property type="entry name" value="U5_2-snRNA_bdg"/>
    <property type="match status" value="1"/>
</dbReference>
<dbReference type="Pfam" id="PF10596">
    <property type="entry name" value="U6-snRNA_bdg"/>
    <property type="match status" value="1"/>
</dbReference>
<dbReference type="SMART" id="SM00232">
    <property type="entry name" value="JAB_MPN"/>
    <property type="match status" value="1"/>
</dbReference>
<dbReference type="SUPFAM" id="SSF53098">
    <property type="entry name" value="Ribonuclease H-like"/>
    <property type="match status" value="2"/>
</dbReference>
<dbReference type="PROSITE" id="PS50249">
    <property type="entry name" value="MPN"/>
    <property type="match status" value="1"/>
</dbReference>
<organism>
    <name type="scientific">Caenorhabditis elegans</name>
    <dbReference type="NCBI Taxonomy" id="6239"/>
    <lineage>
        <taxon>Eukaryota</taxon>
        <taxon>Metazoa</taxon>
        <taxon>Ecdysozoa</taxon>
        <taxon>Nematoda</taxon>
        <taxon>Chromadorea</taxon>
        <taxon>Rhabditida</taxon>
        <taxon>Rhabditina</taxon>
        <taxon>Rhabditomorpha</taxon>
        <taxon>Rhabditoidea</taxon>
        <taxon>Rhabditidae</taxon>
        <taxon>Peloderinae</taxon>
        <taxon>Caenorhabditis</taxon>
    </lineage>
</organism>
<feature type="chain" id="PRO_0000097039" description="Pre-mRNA-splicing factor 8 homolog">
    <location>
        <begin position="1"/>
        <end position="2329"/>
    </location>
</feature>
<feature type="domain" description="MPN" evidence="3">
    <location>
        <begin position="2096"/>
        <end position="2227"/>
    </location>
</feature>
<feature type="region of interest" description="Disordered" evidence="4">
    <location>
        <begin position="1"/>
        <end position="53"/>
    </location>
</feature>
<feature type="region of interest" description="Reverse transcriptase homology domain">
    <location>
        <begin position="804"/>
        <end position="1295"/>
    </location>
</feature>
<feature type="region of interest" description="Linker">
    <location>
        <begin position="1296"/>
        <end position="1570"/>
    </location>
</feature>
<feature type="region of interest" description="Important for branch point selection" evidence="1">
    <location>
        <begin position="1506"/>
        <end position="1519"/>
    </location>
</feature>
<feature type="region of interest" description="Restriction endonuclease homology domain">
    <location>
        <begin position="1574"/>
        <end position="1745"/>
    </location>
</feature>
<feature type="region of interest" description="RNase H homology domain">
    <location>
        <begin position="1760"/>
        <end position="2013"/>
    </location>
</feature>
<feature type="compositionally biased region" description="Basic and acidic residues" evidence="4">
    <location>
        <begin position="34"/>
        <end position="53"/>
    </location>
</feature>
<feature type="helix" evidence="5">
    <location>
        <begin position="2063"/>
        <end position="2073"/>
    </location>
</feature>
<feature type="helix" evidence="5">
    <location>
        <begin position="2074"/>
        <end position="2081"/>
    </location>
</feature>
<feature type="strand" evidence="5">
    <location>
        <begin position="2082"/>
        <end position="2085"/>
    </location>
</feature>
<feature type="strand" evidence="5">
    <location>
        <begin position="2092"/>
        <end position="2094"/>
    </location>
</feature>
<feature type="strand" evidence="5">
    <location>
        <begin position="2096"/>
        <end position="2100"/>
    </location>
</feature>
<feature type="helix" evidence="5">
    <location>
        <begin position="2101"/>
        <end position="2109"/>
    </location>
</feature>
<feature type="strand" evidence="5">
    <location>
        <begin position="2113"/>
        <end position="2115"/>
    </location>
</feature>
<feature type="strand" evidence="5">
    <location>
        <begin position="2118"/>
        <end position="2124"/>
    </location>
</feature>
<feature type="strand" evidence="5">
    <location>
        <begin position="2132"/>
        <end position="2139"/>
    </location>
</feature>
<feature type="strand" evidence="5">
    <location>
        <begin position="2142"/>
        <end position="2145"/>
    </location>
</feature>
<feature type="turn" evidence="5">
    <location>
        <begin position="2160"/>
        <end position="2164"/>
    </location>
</feature>
<feature type="strand" evidence="5">
    <location>
        <begin position="2165"/>
        <end position="2176"/>
    </location>
</feature>
<feature type="helix" evidence="5">
    <location>
        <begin position="2183"/>
        <end position="2195"/>
    </location>
</feature>
<feature type="turn" evidence="5">
    <location>
        <begin position="2201"/>
        <end position="2203"/>
    </location>
</feature>
<feature type="strand" evidence="5">
    <location>
        <begin position="2205"/>
        <end position="2212"/>
    </location>
</feature>
<feature type="strand" evidence="5">
    <location>
        <begin position="2215"/>
        <end position="2223"/>
    </location>
</feature>
<feature type="helix" evidence="5">
    <location>
        <begin position="2225"/>
        <end position="2233"/>
    </location>
</feature>
<feature type="helix" evidence="5">
    <location>
        <begin position="2246"/>
        <end position="2248"/>
    </location>
</feature>
<feature type="strand" evidence="5">
    <location>
        <begin position="2249"/>
        <end position="2257"/>
    </location>
</feature>
<feature type="strand" evidence="5">
    <location>
        <begin position="2263"/>
        <end position="2267"/>
    </location>
</feature>
<feature type="helix" evidence="5">
    <location>
        <begin position="2278"/>
        <end position="2280"/>
    </location>
</feature>
<feature type="strand" evidence="5">
    <location>
        <begin position="2289"/>
        <end position="2291"/>
    </location>
</feature>
<feature type="helix" evidence="5">
    <location>
        <begin position="2300"/>
        <end position="2302"/>
    </location>
</feature>
<accession>P34369</accession>
<comment type="function">
    <text evidence="2">Functions as a scaffold that mediates the ordered assembly of spliceosomal proteins and snRNAs. Required for the assembly of the U4/U6-U5 tri-snRNP complex. Functions as a scaffold that positions spliceosomal U2, U5 and U6 snRNAs at splice sites on pre-mRNA substrates, so that splicing can occur. Interacts with both the 5' and the 3' splice site.</text>
</comment>
<comment type="subunit">
    <text evidence="1">Part of the U5 snRNP complex and of the U4/U6-U5 tri-snRNP complex.</text>
</comment>
<comment type="subcellular location">
    <subcellularLocation>
        <location evidence="1">Nucleus</location>
    </subcellularLocation>
</comment>
<comment type="domain">
    <text>The MPN (JAB/Mov34) domain has structural similarity with deubiquitinating enzymes, but lacks the residues that would bind the catalytic metal ion.</text>
</comment>
<comment type="domain">
    <text evidence="1">Contains a region with structural similarity to reverse transcriptase, presenting the classical thumb, fingers and palm architecture, but lacks enzyme activity, since the essential metal-binding residues are not conserved.</text>
</comment>
<comment type="domain">
    <text evidence="1">Contains a region with structural similarity to type-2 restriction endonucleases, but the residues that would bind catalytic metal ions in endonucleases are instead involved in hydrogen bonds that stabilize the protein structure.</text>
</comment>
<comment type="domain">
    <text evidence="1">Contains a region with structural similarity to RNase H, but lacks RNase H activity.</text>
</comment>
<proteinExistence type="evidence at protein level"/>
<reference key="1">
    <citation type="journal article" date="1994" name="Nature">
        <title>2.2 Mb of contiguous nucleotide sequence from chromosome III of C. elegans.</title>
        <authorList>
            <person name="Wilson R."/>
            <person name="Ainscough R."/>
            <person name="Anderson K."/>
            <person name="Baynes C."/>
            <person name="Berks M."/>
            <person name="Bonfield J."/>
            <person name="Burton J."/>
            <person name="Connell M."/>
            <person name="Copsey T."/>
            <person name="Cooper J."/>
            <person name="Coulson A."/>
            <person name="Craxton M."/>
            <person name="Dear S."/>
            <person name="Du Z."/>
            <person name="Durbin R."/>
            <person name="Favello A."/>
            <person name="Fraser A."/>
            <person name="Fulton L."/>
            <person name="Gardner A."/>
            <person name="Green P."/>
            <person name="Hawkins T."/>
            <person name="Hillier L."/>
            <person name="Jier M."/>
            <person name="Johnston L."/>
            <person name="Jones M."/>
            <person name="Kershaw J."/>
            <person name="Kirsten J."/>
            <person name="Laisster N."/>
            <person name="Latreille P."/>
            <person name="Lightning J."/>
            <person name="Lloyd C."/>
            <person name="Mortimore B."/>
            <person name="O'Callaghan M."/>
            <person name="Parsons J."/>
            <person name="Percy C."/>
            <person name="Rifken L."/>
            <person name="Roopra A."/>
            <person name="Saunders D."/>
            <person name="Shownkeen R."/>
            <person name="Sims M."/>
            <person name="Smaldon N."/>
            <person name="Smith A."/>
            <person name="Smith M."/>
            <person name="Sonnhammer E."/>
            <person name="Staden R."/>
            <person name="Sulston J."/>
            <person name="Thierry-Mieg J."/>
            <person name="Thomas K."/>
            <person name="Vaudin M."/>
            <person name="Vaughan K."/>
            <person name="Waterston R."/>
            <person name="Watson A."/>
            <person name="Weinstock L."/>
            <person name="Wilkinson-Sproat J."/>
            <person name="Wohldman P."/>
        </authorList>
    </citation>
    <scope>NUCLEOTIDE SEQUENCE [LARGE SCALE GENOMIC DNA]</scope>
    <source>
        <strain>Bristol N2</strain>
    </source>
</reference>
<reference key="2">
    <citation type="journal article" date="1998" name="Science">
        <title>Genome sequence of the nematode C. elegans: a platform for investigating biology.</title>
        <authorList>
            <consortium name="The C. elegans sequencing consortium"/>
        </authorList>
    </citation>
    <scope>NUCLEOTIDE SEQUENCE [LARGE SCALE GENOMIC DNA]</scope>
    <source>
        <strain>Bristol N2</strain>
    </source>
</reference>
<reference key="3">
    <citation type="journal article" date="2007" name="Protein Sci.">
        <title>Crystal structure of the C-terminal domain of splicing factor Prp8 carrying retinitis pigmentosa mutants.</title>
        <authorList>
            <person name="Zhang L."/>
            <person name="Shen J."/>
            <person name="Guarnieri M.T."/>
            <person name="Heroux A."/>
            <person name="Yang K."/>
            <person name="Zhao R."/>
        </authorList>
    </citation>
    <scope>X-RAY CRYSTALLOGRAPHY (2.1 ANGSTROMS) OF 2057-2329</scope>
    <scope>ABSENCE OF BOUND METAL</scope>
</reference>
<protein>
    <recommendedName>
        <fullName>Pre-mRNA-splicing factor 8 homolog</fullName>
    </recommendedName>
</protein>
<gene>
    <name type="primary">prp-8</name>
    <name type="ORF">C50C3.6</name>
</gene>
<name>PRP8_CAEEL</name>